<name>MENC_SALPA</name>
<protein>
    <recommendedName>
        <fullName evidence="1">o-succinylbenzoate synthase</fullName>
        <shortName evidence="1">OSB synthase</shortName>
        <shortName evidence="1">OSBS</shortName>
        <ecNumber evidence="1">4.2.1.113</ecNumber>
    </recommendedName>
    <alternativeName>
        <fullName evidence="1">4-(2'-carboxyphenyl)-4-oxybutyric acid synthase</fullName>
    </alternativeName>
    <alternativeName>
        <fullName evidence="1">o-succinylbenzoic acid synthase</fullName>
    </alternativeName>
</protein>
<reference key="1">
    <citation type="journal article" date="2004" name="Nat. Genet.">
        <title>Comparison of genome degradation in Paratyphi A and Typhi, human-restricted serovars of Salmonella enterica that cause typhoid.</title>
        <authorList>
            <person name="McClelland M."/>
            <person name="Sanderson K.E."/>
            <person name="Clifton S.W."/>
            <person name="Latreille P."/>
            <person name="Porwollik S."/>
            <person name="Sabo A."/>
            <person name="Meyer R."/>
            <person name="Bieri T."/>
            <person name="Ozersky P."/>
            <person name="McLellan M."/>
            <person name="Harkins C.R."/>
            <person name="Wang C."/>
            <person name="Nguyen C."/>
            <person name="Berghoff A."/>
            <person name="Elliott G."/>
            <person name="Kohlberg S."/>
            <person name="Strong C."/>
            <person name="Du F."/>
            <person name="Carter J."/>
            <person name="Kremizki C."/>
            <person name="Layman D."/>
            <person name="Leonard S."/>
            <person name="Sun H."/>
            <person name="Fulton L."/>
            <person name="Nash W."/>
            <person name="Miner T."/>
            <person name="Minx P."/>
            <person name="Delehaunty K."/>
            <person name="Fronick C."/>
            <person name="Magrini V."/>
            <person name="Nhan M."/>
            <person name="Warren W."/>
            <person name="Florea L."/>
            <person name="Spieth J."/>
            <person name="Wilson R.K."/>
        </authorList>
    </citation>
    <scope>NUCLEOTIDE SEQUENCE [LARGE SCALE GENOMIC DNA]</scope>
    <source>
        <strain>ATCC 9150 / SARB42</strain>
    </source>
</reference>
<keyword id="KW-0456">Lyase</keyword>
<keyword id="KW-0460">Magnesium</keyword>
<keyword id="KW-0474">Menaquinone biosynthesis</keyword>
<keyword id="KW-0479">Metal-binding</keyword>
<dbReference type="EC" id="4.2.1.113" evidence="1"/>
<dbReference type="EMBL" id="CP000026">
    <property type="protein sequence ID" value="AAV76559.1"/>
    <property type="molecule type" value="Genomic_DNA"/>
</dbReference>
<dbReference type="RefSeq" id="WP_001255559.1">
    <property type="nucleotide sequence ID" value="NC_006511.1"/>
</dbReference>
<dbReference type="SMR" id="Q5PN73"/>
<dbReference type="KEGG" id="spt:SPA0557"/>
<dbReference type="HOGENOM" id="CLU_030273_0_1_6"/>
<dbReference type="UniPathway" id="UPA00079"/>
<dbReference type="UniPathway" id="UPA01057">
    <property type="reaction ID" value="UER00165"/>
</dbReference>
<dbReference type="Proteomes" id="UP000008185">
    <property type="component" value="Chromosome"/>
</dbReference>
<dbReference type="GO" id="GO:0000287">
    <property type="term" value="F:magnesium ion binding"/>
    <property type="evidence" value="ECO:0007669"/>
    <property type="project" value="UniProtKB-UniRule"/>
</dbReference>
<dbReference type="GO" id="GO:0043748">
    <property type="term" value="F:O-succinylbenzoate synthase activity"/>
    <property type="evidence" value="ECO:0007669"/>
    <property type="project" value="UniProtKB-EC"/>
</dbReference>
<dbReference type="GO" id="GO:0009234">
    <property type="term" value="P:menaquinone biosynthetic process"/>
    <property type="evidence" value="ECO:0007669"/>
    <property type="project" value="UniProtKB-UniRule"/>
</dbReference>
<dbReference type="CDD" id="cd03320">
    <property type="entry name" value="OSBS"/>
    <property type="match status" value="1"/>
</dbReference>
<dbReference type="FunFam" id="3.20.20.120:FF:000006">
    <property type="entry name" value="o-succinylbenzoate synthase"/>
    <property type="match status" value="1"/>
</dbReference>
<dbReference type="Gene3D" id="3.20.20.120">
    <property type="entry name" value="Enolase-like C-terminal domain"/>
    <property type="match status" value="1"/>
</dbReference>
<dbReference type="Gene3D" id="3.30.390.10">
    <property type="entry name" value="Enolase-like, N-terminal domain"/>
    <property type="match status" value="1"/>
</dbReference>
<dbReference type="HAMAP" id="MF_00470">
    <property type="entry name" value="MenC_1"/>
    <property type="match status" value="1"/>
</dbReference>
<dbReference type="InterPro" id="IPR036849">
    <property type="entry name" value="Enolase-like_C_sf"/>
</dbReference>
<dbReference type="InterPro" id="IPR029017">
    <property type="entry name" value="Enolase-like_N"/>
</dbReference>
<dbReference type="InterPro" id="IPR029065">
    <property type="entry name" value="Enolase_C-like"/>
</dbReference>
<dbReference type="InterPro" id="IPR013342">
    <property type="entry name" value="Mandelate_racemase_C"/>
</dbReference>
<dbReference type="InterPro" id="IPR010196">
    <property type="entry name" value="OSB_synthase_MenC1"/>
</dbReference>
<dbReference type="InterPro" id="IPR041338">
    <property type="entry name" value="OSBS_N"/>
</dbReference>
<dbReference type="NCBIfam" id="TIGR01927">
    <property type="entry name" value="menC_gam_Gplu"/>
    <property type="match status" value="1"/>
</dbReference>
<dbReference type="NCBIfam" id="NF003473">
    <property type="entry name" value="PRK05105.1"/>
    <property type="match status" value="1"/>
</dbReference>
<dbReference type="PANTHER" id="PTHR48073:SF2">
    <property type="entry name" value="O-SUCCINYLBENZOATE SYNTHASE"/>
    <property type="match status" value="1"/>
</dbReference>
<dbReference type="PANTHER" id="PTHR48073">
    <property type="entry name" value="O-SUCCINYLBENZOATE SYNTHASE-RELATED"/>
    <property type="match status" value="1"/>
</dbReference>
<dbReference type="Pfam" id="PF21508">
    <property type="entry name" value="MenC_N"/>
    <property type="match status" value="1"/>
</dbReference>
<dbReference type="Pfam" id="PF13378">
    <property type="entry name" value="MR_MLE_C"/>
    <property type="match status" value="1"/>
</dbReference>
<dbReference type="SFLD" id="SFLDG00180">
    <property type="entry name" value="muconate_cycloisomerase"/>
    <property type="match status" value="1"/>
</dbReference>
<dbReference type="SFLD" id="SFLDF00009">
    <property type="entry name" value="o-succinylbenzoate_synthase"/>
    <property type="match status" value="1"/>
</dbReference>
<dbReference type="SMART" id="SM00922">
    <property type="entry name" value="MR_MLE"/>
    <property type="match status" value="1"/>
</dbReference>
<dbReference type="SUPFAM" id="SSF51604">
    <property type="entry name" value="Enolase C-terminal domain-like"/>
    <property type="match status" value="1"/>
</dbReference>
<dbReference type="SUPFAM" id="SSF54826">
    <property type="entry name" value="Enolase N-terminal domain-like"/>
    <property type="match status" value="1"/>
</dbReference>
<gene>
    <name evidence="1" type="primary">menC</name>
    <name type="ordered locus">SPA0557</name>
</gene>
<proteinExistence type="inferred from homology"/>
<comment type="function">
    <text evidence="1">Converts 2-succinyl-6-hydroxy-2,4-cyclohexadiene-1-carboxylate (SHCHC) to 2-succinylbenzoate (OSB).</text>
</comment>
<comment type="catalytic activity">
    <reaction evidence="1">
        <text>(1R,6R)-6-hydroxy-2-succinyl-cyclohexa-2,4-diene-1-carboxylate = 2-succinylbenzoate + H2O</text>
        <dbReference type="Rhea" id="RHEA:10196"/>
        <dbReference type="ChEBI" id="CHEBI:15377"/>
        <dbReference type="ChEBI" id="CHEBI:18325"/>
        <dbReference type="ChEBI" id="CHEBI:58689"/>
        <dbReference type="EC" id="4.2.1.113"/>
    </reaction>
</comment>
<comment type="cofactor">
    <cofactor evidence="1">
        <name>a divalent metal cation</name>
        <dbReference type="ChEBI" id="CHEBI:60240"/>
    </cofactor>
</comment>
<comment type="pathway">
    <text evidence="1">Quinol/quinone metabolism; 1,4-dihydroxy-2-naphthoate biosynthesis; 1,4-dihydroxy-2-naphthoate from chorismate: step 4/7.</text>
</comment>
<comment type="pathway">
    <text evidence="1">Quinol/quinone metabolism; menaquinone biosynthesis.</text>
</comment>
<comment type="similarity">
    <text evidence="1">Belongs to the mandelate racemase/muconate lactonizing enzyme family. MenC type 1 subfamily.</text>
</comment>
<organism>
    <name type="scientific">Salmonella paratyphi A (strain ATCC 9150 / SARB42)</name>
    <dbReference type="NCBI Taxonomy" id="295319"/>
    <lineage>
        <taxon>Bacteria</taxon>
        <taxon>Pseudomonadati</taxon>
        <taxon>Pseudomonadota</taxon>
        <taxon>Gammaproteobacteria</taxon>
        <taxon>Enterobacterales</taxon>
        <taxon>Enterobacteriaceae</taxon>
        <taxon>Salmonella</taxon>
    </lineage>
</organism>
<feature type="chain" id="PRO_1000013810" description="o-succinylbenzoate synthase">
    <location>
        <begin position="1"/>
        <end position="320"/>
    </location>
</feature>
<feature type="active site" description="Proton donor" evidence="1">
    <location>
        <position position="133"/>
    </location>
</feature>
<feature type="active site" description="Proton acceptor" evidence="1">
    <location>
        <position position="235"/>
    </location>
</feature>
<feature type="binding site" evidence="1">
    <location>
        <position position="161"/>
    </location>
    <ligand>
        <name>Mg(2+)</name>
        <dbReference type="ChEBI" id="CHEBI:18420"/>
    </ligand>
</feature>
<feature type="binding site" evidence="1">
    <location>
        <position position="190"/>
    </location>
    <ligand>
        <name>Mg(2+)</name>
        <dbReference type="ChEBI" id="CHEBI:18420"/>
    </ligand>
</feature>
<feature type="binding site" evidence="1">
    <location>
        <position position="213"/>
    </location>
    <ligand>
        <name>Mg(2+)</name>
        <dbReference type="ChEBI" id="CHEBI:18420"/>
    </ligand>
</feature>
<evidence type="ECO:0000255" key="1">
    <source>
        <dbReference type="HAMAP-Rule" id="MF_00470"/>
    </source>
</evidence>
<sequence length="320" mass="35373">MRSAQVYRWQIPMDAGVVLRDRRLKTRDGLYVCLRDGEREGWGEISPLPGFSQETWEEAQTALLTWVNDWLQGSEGLPEMPSVAFGASCALAELTGVLPEAADYRAAPLCTGDPDDLVLRLADMPGEKIAKVKVGLYEAVRDGMVVNLLLEAIPDLHLRLDANRAWTPLKAQQFAKYVNPDYRARIAFLEEPCKTRDDSRAFARETGIAIAWDESLREADFTFEAEEGVRAVVIKPTLTGSLDKVREQVAAAHALGLTAVISSSIESSLGLTQLARIAAWLTPGTLPGLDTLHLMQAQQIRPWPGNALPCLKRDELERLL</sequence>
<accession>Q5PN73</accession>